<accession>A4VNV6</accession>
<dbReference type="EC" id="2.3.3.13" evidence="1"/>
<dbReference type="EMBL" id="CP000304">
    <property type="protein sequence ID" value="ABP80657.1"/>
    <property type="molecule type" value="Genomic_DNA"/>
</dbReference>
<dbReference type="RefSeq" id="WP_011914111.1">
    <property type="nucleotide sequence ID" value="NC_009434.1"/>
</dbReference>
<dbReference type="SMR" id="A4VNV6"/>
<dbReference type="KEGG" id="psa:PST_3016"/>
<dbReference type="eggNOG" id="COG0119">
    <property type="taxonomic scope" value="Bacteria"/>
</dbReference>
<dbReference type="HOGENOM" id="CLU_004588_3_0_6"/>
<dbReference type="UniPathway" id="UPA00048">
    <property type="reaction ID" value="UER00070"/>
</dbReference>
<dbReference type="Proteomes" id="UP000000233">
    <property type="component" value="Chromosome"/>
</dbReference>
<dbReference type="GO" id="GO:0005737">
    <property type="term" value="C:cytoplasm"/>
    <property type="evidence" value="ECO:0007669"/>
    <property type="project" value="UniProtKB-SubCell"/>
</dbReference>
<dbReference type="GO" id="GO:0003852">
    <property type="term" value="F:2-isopropylmalate synthase activity"/>
    <property type="evidence" value="ECO:0007669"/>
    <property type="project" value="UniProtKB-UniRule"/>
</dbReference>
<dbReference type="GO" id="GO:0003985">
    <property type="term" value="F:acetyl-CoA C-acetyltransferase activity"/>
    <property type="evidence" value="ECO:0007669"/>
    <property type="project" value="UniProtKB-UniRule"/>
</dbReference>
<dbReference type="GO" id="GO:0000287">
    <property type="term" value="F:magnesium ion binding"/>
    <property type="evidence" value="ECO:0007669"/>
    <property type="project" value="UniProtKB-UniRule"/>
</dbReference>
<dbReference type="GO" id="GO:0009098">
    <property type="term" value="P:L-leucine biosynthetic process"/>
    <property type="evidence" value="ECO:0007669"/>
    <property type="project" value="UniProtKB-UniRule"/>
</dbReference>
<dbReference type="CDD" id="cd07942">
    <property type="entry name" value="DRE_TIM_LeuA"/>
    <property type="match status" value="1"/>
</dbReference>
<dbReference type="FunFam" id="3.20.20.70:FF:000045">
    <property type="entry name" value="2-isopropylmalate synthase"/>
    <property type="match status" value="1"/>
</dbReference>
<dbReference type="FunFam" id="3.30.160.270:FF:000006">
    <property type="entry name" value="2-isopropylmalate synthase"/>
    <property type="match status" value="1"/>
</dbReference>
<dbReference type="Gene3D" id="3.30.160.270">
    <property type="match status" value="1"/>
</dbReference>
<dbReference type="Gene3D" id="3.20.20.70">
    <property type="entry name" value="Aldolase class I"/>
    <property type="match status" value="1"/>
</dbReference>
<dbReference type="HAMAP" id="MF_00572">
    <property type="entry name" value="LeuA_type2"/>
    <property type="match status" value="1"/>
</dbReference>
<dbReference type="InterPro" id="IPR013709">
    <property type="entry name" value="2-isopropylmalate_synth_dimer"/>
</dbReference>
<dbReference type="InterPro" id="IPR002034">
    <property type="entry name" value="AIPM/Hcit_synth_CS"/>
</dbReference>
<dbReference type="InterPro" id="IPR013785">
    <property type="entry name" value="Aldolase_TIM"/>
</dbReference>
<dbReference type="InterPro" id="IPR005668">
    <property type="entry name" value="IPM_Synthase"/>
</dbReference>
<dbReference type="InterPro" id="IPR054692">
    <property type="entry name" value="LeuA-like_post-cat"/>
</dbReference>
<dbReference type="InterPro" id="IPR036230">
    <property type="entry name" value="LeuA_allosteric_dom_sf"/>
</dbReference>
<dbReference type="InterPro" id="IPR039371">
    <property type="entry name" value="LeuA_N_DRE-TIM"/>
</dbReference>
<dbReference type="InterPro" id="IPR000891">
    <property type="entry name" value="PYR_CT"/>
</dbReference>
<dbReference type="NCBIfam" id="TIGR00970">
    <property type="entry name" value="leuA_yeast"/>
    <property type="match status" value="1"/>
</dbReference>
<dbReference type="NCBIfam" id="NF002991">
    <property type="entry name" value="PRK03739.1"/>
    <property type="match status" value="1"/>
</dbReference>
<dbReference type="PANTHER" id="PTHR46911">
    <property type="match status" value="1"/>
</dbReference>
<dbReference type="PANTHER" id="PTHR46911:SF1">
    <property type="entry name" value="2-ISOPROPYLMALATE SYNTHASE"/>
    <property type="match status" value="1"/>
</dbReference>
<dbReference type="Pfam" id="PF00682">
    <property type="entry name" value="HMGL-like"/>
    <property type="match status" value="1"/>
</dbReference>
<dbReference type="Pfam" id="PF22615">
    <property type="entry name" value="IPMS_D2"/>
    <property type="match status" value="1"/>
</dbReference>
<dbReference type="Pfam" id="PF08502">
    <property type="entry name" value="LeuA_dimer"/>
    <property type="match status" value="1"/>
</dbReference>
<dbReference type="SMART" id="SM00917">
    <property type="entry name" value="LeuA_dimer"/>
    <property type="match status" value="1"/>
</dbReference>
<dbReference type="SUPFAM" id="SSF110921">
    <property type="entry name" value="2-isopropylmalate synthase LeuA, allosteric (dimerisation) domain"/>
    <property type="match status" value="1"/>
</dbReference>
<dbReference type="SUPFAM" id="SSF51569">
    <property type="entry name" value="Aldolase"/>
    <property type="match status" value="1"/>
</dbReference>
<dbReference type="SUPFAM" id="SSF89000">
    <property type="entry name" value="post-HMGL domain-like"/>
    <property type="match status" value="1"/>
</dbReference>
<dbReference type="PROSITE" id="PS00815">
    <property type="entry name" value="AIPM_HOMOCIT_SYNTH_1"/>
    <property type="match status" value="1"/>
</dbReference>
<dbReference type="PROSITE" id="PS00816">
    <property type="entry name" value="AIPM_HOMOCIT_SYNTH_2"/>
    <property type="match status" value="1"/>
</dbReference>
<dbReference type="PROSITE" id="PS50991">
    <property type="entry name" value="PYR_CT"/>
    <property type="match status" value="1"/>
</dbReference>
<gene>
    <name evidence="1" type="primary">leuA</name>
    <name type="ordered locus">PST_3016</name>
</gene>
<proteinExistence type="inferred from homology"/>
<feature type="chain" id="PRO_1000025039" description="2-isopropylmalate synthase">
    <location>
        <begin position="1"/>
        <end position="556"/>
    </location>
</feature>
<feature type="domain" description="Pyruvate carboxyltransferase" evidence="1">
    <location>
        <begin position="33"/>
        <end position="307"/>
    </location>
</feature>
<feature type="region of interest" description="Regulatory domain" evidence="1">
    <location>
        <begin position="439"/>
        <end position="556"/>
    </location>
</feature>
<feature type="binding site" evidence="1">
    <location>
        <position position="42"/>
    </location>
    <ligand>
        <name>Mg(2+)</name>
        <dbReference type="ChEBI" id="CHEBI:18420"/>
    </ligand>
</feature>
<feature type="binding site" evidence="1">
    <location>
        <position position="246"/>
    </location>
    <ligand>
        <name>Mg(2+)</name>
        <dbReference type="ChEBI" id="CHEBI:18420"/>
    </ligand>
</feature>
<feature type="binding site" evidence="1">
    <location>
        <position position="248"/>
    </location>
    <ligand>
        <name>Mg(2+)</name>
        <dbReference type="ChEBI" id="CHEBI:18420"/>
    </ligand>
</feature>
<feature type="binding site" evidence="1">
    <location>
        <position position="282"/>
    </location>
    <ligand>
        <name>Mg(2+)</name>
        <dbReference type="ChEBI" id="CHEBI:18420"/>
    </ligand>
</feature>
<evidence type="ECO:0000255" key="1">
    <source>
        <dbReference type="HAMAP-Rule" id="MF_00572"/>
    </source>
</evidence>
<comment type="function">
    <text evidence="1">Catalyzes the condensation of the acetyl group of acetyl-CoA with 3-methyl-2-oxobutanoate (2-ketoisovalerate) to form 3-carboxy-3-hydroxy-4-methylpentanoate (2-isopropylmalate).</text>
</comment>
<comment type="catalytic activity">
    <reaction evidence="1">
        <text>3-methyl-2-oxobutanoate + acetyl-CoA + H2O = (2S)-2-isopropylmalate + CoA + H(+)</text>
        <dbReference type="Rhea" id="RHEA:21524"/>
        <dbReference type="ChEBI" id="CHEBI:1178"/>
        <dbReference type="ChEBI" id="CHEBI:11851"/>
        <dbReference type="ChEBI" id="CHEBI:15377"/>
        <dbReference type="ChEBI" id="CHEBI:15378"/>
        <dbReference type="ChEBI" id="CHEBI:57287"/>
        <dbReference type="ChEBI" id="CHEBI:57288"/>
        <dbReference type="EC" id="2.3.3.13"/>
    </reaction>
</comment>
<comment type="cofactor">
    <cofactor evidence="1">
        <name>Mg(2+)</name>
        <dbReference type="ChEBI" id="CHEBI:18420"/>
    </cofactor>
</comment>
<comment type="pathway">
    <text evidence="1">Amino-acid biosynthesis; L-leucine biosynthesis; L-leucine from 3-methyl-2-oxobutanoate: step 1/4.</text>
</comment>
<comment type="subunit">
    <text evidence="1">Homodimer.</text>
</comment>
<comment type="subcellular location">
    <subcellularLocation>
        <location evidence="1">Cytoplasm</location>
    </subcellularLocation>
</comment>
<comment type="similarity">
    <text evidence="1">Belongs to the alpha-IPM synthase/homocitrate synthase family. LeuA type 2 subfamily.</text>
</comment>
<reference key="1">
    <citation type="journal article" date="2008" name="Proc. Natl. Acad. Sci. U.S.A.">
        <title>Nitrogen fixation island and rhizosphere competence traits in the genome of root-associated Pseudomonas stutzeri A1501.</title>
        <authorList>
            <person name="Yan Y."/>
            <person name="Yang J."/>
            <person name="Dou Y."/>
            <person name="Chen M."/>
            <person name="Ping S."/>
            <person name="Peng J."/>
            <person name="Lu W."/>
            <person name="Zhang W."/>
            <person name="Yao Z."/>
            <person name="Li H."/>
            <person name="Liu W."/>
            <person name="He S."/>
            <person name="Geng L."/>
            <person name="Zhang X."/>
            <person name="Yang F."/>
            <person name="Yu H."/>
            <person name="Zhan Y."/>
            <person name="Li D."/>
            <person name="Lin Z."/>
            <person name="Wang Y."/>
            <person name="Elmerich C."/>
            <person name="Lin M."/>
            <person name="Jin Q."/>
        </authorList>
    </citation>
    <scope>NUCLEOTIDE SEQUENCE [LARGE SCALE GENOMIC DNA]</scope>
    <source>
        <strain>A1501</strain>
    </source>
</reference>
<protein>
    <recommendedName>
        <fullName evidence="1">2-isopropylmalate synthase</fullName>
        <ecNumber evidence="1">2.3.3.13</ecNumber>
    </recommendedName>
    <alternativeName>
        <fullName evidence="1">Alpha-IPM synthase</fullName>
    </alternativeName>
    <alternativeName>
        <fullName evidence="1">Alpha-isopropylmalate synthase</fullName>
    </alternativeName>
</protein>
<keyword id="KW-0028">Amino-acid biosynthesis</keyword>
<keyword id="KW-0100">Branched-chain amino acid biosynthesis</keyword>
<keyword id="KW-0963">Cytoplasm</keyword>
<keyword id="KW-0432">Leucine biosynthesis</keyword>
<keyword id="KW-0460">Magnesium</keyword>
<keyword id="KW-0479">Metal-binding</keyword>
<keyword id="KW-1185">Reference proteome</keyword>
<keyword id="KW-0808">Transferase</keyword>
<name>LEU1_STUS1</name>
<sequence>MTMLKNPSNKYRAFPAIDIPDRTWPSKAITQAPIWLSSDLRDGNQSLIEPMDAAKKMRFFKTLVQVGLKEIEVGFPSASQTDFDFVRELIEGGHIPDDVTIQVLTQAREDLITRTFESLKGAKQAIVHYYNATAPSFRRIVFNQDKAGVIQIAVNAGRIIKRLAEQNPETNWRFEYSPEIFSSTEPEFAVEVCNAVIEVFQPTPEQKLILNLPATVEAATPNVYADQIEWFCRHIDRRDSVLVSLHTHNDRGTGVAATELGLMAGADRVEGCLFGNGERTGNVDLVTVALNMYTQGVDPQLDFSDIDAVRKVVEECNQLPVHPRHPYVGDLVHTAFSGSHQDAIRKGFSQQDPNGLWEVPYLPIDPADIGRSYEAVIRVNSQSGKGGITFLLEQEYGISLPRRMQIEFSQVVQKETDRLGLEMSAKQIYALLEAEYLQATAPYTLKGHRLQEENGTSAVDVEVAADGEVIHWRGIGKGPLEALVAALPVKLEIMDYHEHAIGAGSNAKAAAYIEVRLDGERPLHGIGIDENITTASIRALFSAMNRALHQAQEAAA</sequence>
<organism>
    <name type="scientific">Stutzerimonas stutzeri (strain A1501)</name>
    <name type="common">Pseudomonas stutzeri</name>
    <dbReference type="NCBI Taxonomy" id="379731"/>
    <lineage>
        <taxon>Bacteria</taxon>
        <taxon>Pseudomonadati</taxon>
        <taxon>Pseudomonadota</taxon>
        <taxon>Gammaproteobacteria</taxon>
        <taxon>Pseudomonadales</taxon>
        <taxon>Pseudomonadaceae</taxon>
        <taxon>Stutzerimonas</taxon>
    </lineage>
</organism>